<comment type="function">
    <text evidence="1">Dirigent proteins impart stereoselectivity on the phenoxy radical-coupling reaction, yielding optically active lignans from two molecules of coniferyl alcohol in the biosynthesis of lignans, flavonolignans, and alkaloids and thus plays a central role in plant secondary metabolism.</text>
</comment>
<comment type="subunit">
    <text evidence="1">Homodimer.</text>
</comment>
<comment type="subcellular location">
    <subcellularLocation>
        <location evidence="1">Secreted</location>
        <location evidence="1">Extracellular space</location>
        <location evidence="1">Apoplast</location>
    </subcellularLocation>
</comment>
<comment type="similarity">
    <text evidence="3">Belongs to the plant dirigent protein family.</text>
</comment>
<comment type="sequence caution" evidence="3">
    <conflict type="erroneous gene model prediction">
        <sequence resource="EMBL-CDS" id="BAB01913"/>
    </conflict>
</comment>
<keyword id="KW-0052">Apoplast</keyword>
<keyword id="KW-0325">Glycoprotein</keyword>
<keyword id="KW-1185">Reference proteome</keyword>
<keyword id="KW-0964">Secreted</keyword>
<keyword id="KW-0732">Signal</keyword>
<name>DIR8_ARATH</name>
<proteinExistence type="inferred from homology"/>
<reference key="1">
    <citation type="journal article" date="2000" name="DNA Res.">
        <title>Structural analysis of Arabidopsis thaliana chromosome 3. II. Sequence features of the 4,251,695 bp regions covered by 90 P1, TAC and BAC clones.</title>
        <authorList>
            <person name="Kaneko T."/>
            <person name="Katoh T."/>
            <person name="Sato S."/>
            <person name="Nakamura Y."/>
            <person name="Asamizu E."/>
            <person name="Tabata S."/>
        </authorList>
    </citation>
    <scope>NUCLEOTIDE SEQUENCE [LARGE SCALE GENOMIC DNA]</scope>
    <source>
        <strain>cv. Columbia</strain>
    </source>
</reference>
<reference key="2">
    <citation type="journal article" date="2017" name="Plant J.">
        <title>Araport11: a complete reannotation of the Arabidopsis thaliana reference genome.</title>
        <authorList>
            <person name="Cheng C.Y."/>
            <person name="Krishnakumar V."/>
            <person name="Chan A.P."/>
            <person name="Thibaud-Nissen F."/>
            <person name="Schobel S."/>
            <person name="Town C.D."/>
        </authorList>
    </citation>
    <scope>GENOME REANNOTATION</scope>
    <source>
        <strain>cv. Columbia</strain>
    </source>
</reference>
<reference key="3">
    <citation type="journal article" date="2007" name="Phytochemistry">
        <title>Dirigent proteins in conifer defense II: Extended gene discovery, phylogeny, and constitutive and stress-induced gene expression in spruce (Picea spp.).</title>
        <authorList>
            <person name="Ralph S.G."/>
            <person name="Jancsik S."/>
            <person name="Bohlmann J."/>
        </authorList>
    </citation>
    <scope>GENE FAMILY</scope>
    <scope>NOMENCLATURE</scope>
</reference>
<dbReference type="EMBL" id="AP001307">
    <property type="protein sequence ID" value="BAB01913.1"/>
    <property type="status" value="ALT_SEQ"/>
    <property type="molecule type" value="Genomic_DNA"/>
</dbReference>
<dbReference type="EMBL" id="CP002686">
    <property type="protein sequence ID" value="AEE75389.1"/>
    <property type="molecule type" value="Genomic_DNA"/>
</dbReference>
<dbReference type="RefSeq" id="NP_187976.4">
    <property type="nucleotide sequence ID" value="NM_112213.4"/>
</dbReference>
<dbReference type="SMR" id="F4JDF3"/>
<dbReference type="STRING" id="3702.F4JDF3"/>
<dbReference type="GlyCosmos" id="F4JDF3">
    <property type="glycosylation" value="3 sites, No reported glycans"/>
</dbReference>
<dbReference type="GlyGen" id="F4JDF3">
    <property type="glycosylation" value="3 sites"/>
</dbReference>
<dbReference type="PaxDb" id="3702-AT3G13662.1"/>
<dbReference type="EnsemblPlants" id="AT3G13662.1">
    <property type="protein sequence ID" value="AT3G13662.1"/>
    <property type="gene ID" value="AT3G13662"/>
</dbReference>
<dbReference type="GeneID" id="820571"/>
<dbReference type="Gramene" id="AT3G13662.1">
    <property type="protein sequence ID" value="AT3G13662.1"/>
    <property type="gene ID" value="AT3G13662"/>
</dbReference>
<dbReference type="KEGG" id="ath:AT3G13662"/>
<dbReference type="Araport" id="AT3G13662"/>
<dbReference type="TAIR" id="AT3G13662"/>
<dbReference type="HOGENOM" id="CLU_087111_2_1_1"/>
<dbReference type="InParanoid" id="F4JDF3"/>
<dbReference type="OMA" id="KHETLTH"/>
<dbReference type="PRO" id="PR:F4JDF3"/>
<dbReference type="Proteomes" id="UP000006548">
    <property type="component" value="Chromosome 3"/>
</dbReference>
<dbReference type="ExpressionAtlas" id="F4JDF3">
    <property type="expression patterns" value="baseline and differential"/>
</dbReference>
<dbReference type="GO" id="GO:0048046">
    <property type="term" value="C:apoplast"/>
    <property type="evidence" value="ECO:0007669"/>
    <property type="project" value="UniProtKB-SubCell"/>
</dbReference>
<dbReference type="GO" id="GO:0009699">
    <property type="term" value="P:phenylpropanoid biosynthetic process"/>
    <property type="evidence" value="ECO:0007669"/>
    <property type="project" value="UniProtKB-ARBA"/>
</dbReference>
<dbReference type="Gene3D" id="2.40.480.10">
    <property type="entry name" value="Allene oxide cyclase-like"/>
    <property type="match status" value="1"/>
</dbReference>
<dbReference type="InterPro" id="IPR044859">
    <property type="entry name" value="Allene_oxi_cyc_Dirigent"/>
</dbReference>
<dbReference type="InterPro" id="IPR004265">
    <property type="entry name" value="Dirigent"/>
</dbReference>
<dbReference type="PANTHER" id="PTHR21495">
    <property type="entry name" value="NUCLEOPORIN-RELATED"/>
    <property type="match status" value="1"/>
</dbReference>
<dbReference type="Pfam" id="PF03018">
    <property type="entry name" value="Dirigent"/>
    <property type="match status" value="1"/>
</dbReference>
<protein>
    <recommendedName>
        <fullName>Dirigent protein 8</fullName>
        <shortName>AtDIR8</shortName>
    </recommendedName>
</protein>
<feature type="signal peptide" evidence="2">
    <location>
        <begin position="1"/>
        <end position="22"/>
    </location>
</feature>
<feature type="chain" id="PRO_0000422839" description="Dirigent protein 8">
    <location>
        <begin position="23"/>
        <end position="173"/>
    </location>
</feature>
<feature type="glycosylation site" description="N-linked (GlcNAc...) asparagine" evidence="2">
    <location>
        <position position="69"/>
    </location>
</feature>
<feature type="glycosylation site" description="N-linked (GlcNAc...) asparagine" evidence="2">
    <location>
        <position position="90"/>
    </location>
</feature>
<feature type="glycosylation site" description="N-linked (GlcNAc...) asparagine" evidence="2">
    <location>
        <position position="125"/>
    </location>
</feature>
<accession>F4JDF3</accession>
<accession>Q9LID4</accession>
<gene>
    <name type="primary">DIR8</name>
    <name type="ordered locus">At3g13662</name>
    <name type="ORF">MMM17.6</name>
</gene>
<evidence type="ECO:0000250" key="1"/>
<evidence type="ECO:0000255" key="2"/>
<evidence type="ECO:0000305" key="3"/>
<sequence length="173" mass="18875">MTNLILIFAAQILLFYAVASVGDELGRTMNGKHLGPYKKEKLTHLRVYWHNSVNGRNPSSVMIQQPVLNSSLSGSITMMDDPLTFDVPRNATVVGQAQGMYVAAAQGEIGFLMVMNFAFTTGKYNGSTITILGRNVVMSKVREMPVVGGSGIFRFARGYVEARTKSFDLKAGC</sequence>
<organism>
    <name type="scientific">Arabidopsis thaliana</name>
    <name type="common">Mouse-ear cress</name>
    <dbReference type="NCBI Taxonomy" id="3702"/>
    <lineage>
        <taxon>Eukaryota</taxon>
        <taxon>Viridiplantae</taxon>
        <taxon>Streptophyta</taxon>
        <taxon>Embryophyta</taxon>
        <taxon>Tracheophyta</taxon>
        <taxon>Spermatophyta</taxon>
        <taxon>Magnoliopsida</taxon>
        <taxon>eudicotyledons</taxon>
        <taxon>Gunneridae</taxon>
        <taxon>Pentapetalae</taxon>
        <taxon>rosids</taxon>
        <taxon>malvids</taxon>
        <taxon>Brassicales</taxon>
        <taxon>Brassicaceae</taxon>
        <taxon>Camelineae</taxon>
        <taxon>Arabidopsis</taxon>
    </lineage>
</organism>